<sequence length="12" mass="1389">APPQPSDNFIRF</sequence>
<protein>
    <recommendedName>
        <fullName>FMRFamide-18</fullName>
    </recommendedName>
    <alternativeName>
        <fullName>Neb-FIRFamide-1</fullName>
    </alternativeName>
    <alternativeName>
        <fullName>SabFMRFamide-18</fullName>
    </alternativeName>
</protein>
<evidence type="ECO:0000269" key="1">
    <source>
    </source>
</evidence>
<evidence type="ECO:0000269" key="2">
    <source>
    </source>
</evidence>
<evidence type="ECO:0000305" key="3"/>
<keyword id="KW-0027">Amidation</keyword>
<keyword id="KW-0903">Direct protein sequencing</keyword>
<keyword id="KW-0527">Neuropeptide</keyword>
<keyword id="KW-0964">Secreted</keyword>
<proteinExistence type="evidence at protein level"/>
<reference key="1">
    <citation type="journal article" date="2002" name="Proc. Natl. Acad. Sci. U.S.A.">
        <title>Identification in Drosophila melanogaster of the invertebrate G protein-coupled FMRFamide receptor.</title>
        <authorList>
            <person name="Meeusen T."/>
            <person name="Mertens I."/>
            <person name="Clynen E."/>
            <person name="Baggerman G."/>
            <person name="Nichols R."/>
            <person name="Nachman R.J."/>
            <person name="Huybrechts R."/>
            <person name="De Loof A."/>
            <person name="Schoofs L."/>
        </authorList>
    </citation>
    <scope>PROTEIN SEQUENCE</scope>
    <scope>FUNCTION</scope>
    <scope>AMIDATION AT PHE-12</scope>
    <source>
        <tissue>CNS</tissue>
    </source>
</reference>
<reference key="2">
    <citation type="journal article" date="2009" name="Gen. Comp. Endocrinol.">
        <title>Extended FMRFamides in dipteran insects: conservative expression in the neuroendocrine system is accompanied by rapid sequence evolution.</title>
        <authorList>
            <person name="Rahman M.M."/>
            <person name="Fromm B."/>
            <person name="Neupert S."/>
            <person name="Kreusch S."/>
            <person name="Predel R."/>
        </authorList>
    </citation>
    <scope>PROTEIN SEQUENCE</scope>
    <scope>MASS SPECTROMETRY</scope>
    <scope>AMIDATION AT PHE-12</scope>
    <source>
        <tissue>Dorsal ganglionic sheath</tissue>
    </source>
</reference>
<feature type="peptide" id="PRO_0000043713" description="FMRFamide-18">
    <location>
        <begin position="1"/>
        <end position="12"/>
    </location>
</feature>
<feature type="modified residue" description="Phenylalanine amide" evidence="1 2">
    <location>
        <position position="12"/>
    </location>
</feature>
<dbReference type="GO" id="GO:0005576">
    <property type="term" value="C:extracellular region"/>
    <property type="evidence" value="ECO:0007669"/>
    <property type="project" value="UniProtKB-SubCell"/>
</dbReference>
<dbReference type="GO" id="GO:0007218">
    <property type="term" value="P:neuropeptide signaling pathway"/>
    <property type="evidence" value="ECO:0007669"/>
    <property type="project" value="UniProtKB-KW"/>
</dbReference>
<organism>
    <name type="scientific">Sarcophaga bullata</name>
    <name type="common">Grey flesh fly</name>
    <name type="synonym">Neobellieria bullata</name>
    <dbReference type="NCBI Taxonomy" id="7385"/>
    <lineage>
        <taxon>Eukaryota</taxon>
        <taxon>Metazoa</taxon>
        <taxon>Ecdysozoa</taxon>
        <taxon>Arthropoda</taxon>
        <taxon>Hexapoda</taxon>
        <taxon>Insecta</taxon>
        <taxon>Pterygota</taxon>
        <taxon>Neoptera</taxon>
        <taxon>Endopterygota</taxon>
        <taxon>Diptera</taxon>
        <taxon>Brachycera</taxon>
        <taxon>Muscomorpha</taxon>
        <taxon>Oestroidea</taxon>
        <taxon>Sarcophagidae</taxon>
        <taxon>Sarcophaga</taxon>
        <taxon>Neobellieria</taxon>
    </lineage>
</organism>
<comment type="function">
    <text evidence="1">Has modulatory actions at skeletal neuromuscular junctions.</text>
</comment>
<comment type="subcellular location">
    <subcellularLocation>
        <location>Secreted</location>
    </subcellularLocation>
</comment>
<comment type="mass spectrometry" mass="1387.71" method="MALDI" evidence="2"/>
<comment type="similarity">
    <text evidence="3">Belongs to the FARP (FMRFamide related peptide) family.</text>
</comment>
<accession>P83349</accession>
<name>FAR18_SARBU</name>